<accession>P03159</accession>
<dbReference type="EC" id="2.7.7.7" evidence="1"/>
<dbReference type="EC" id="2.7.7.49" evidence="1"/>
<dbReference type="EC" id="3.1.26.4" evidence="1"/>
<dbReference type="EMBL" id="J02205">
    <property type="status" value="NOT_ANNOTATED_CDS"/>
    <property type="molecule type" value="Genomic_RNA"/>
</dbReference>
<dbReference type="EMBL" id="X02763">
    <property type="protein sequence ID" value="CAA26538.1"/>
    <property type="molecule type" value="Genomic_DNA"/>
</dbReference>
<dbReference type="PIR" id="A94409">
    <property type="entry name" value="JDVLVD"/>
</dbReference>
<dbReference type="ChEMBL" id="CHEMBL3833482"/>
<dbReference type="Proteomes" id="UP000008766">
    <property type="component" value="Segment"/>
</dbReference>
<dbReference type="GO" id="GO:0003677">
    <property type="term" value="F:DNA binding"/>
    <property type="evidence" value="ECO:0007669"/>
    <property type="project" value="UniProtKB-UniRule"/>
</dbReference>
<dbReference type="GO" id="GO:0003887">
    <property type="term" value="F:DNA-directed DNA polymerase activity"/>
    <property type="evidence" value="ECO:0007669"/>
    <property type="project" value="UniProtKB-UniRule"/>
</dbReference>
<dbReference type="GO" id="GO:0046872">
    <property type="term" value="F:metal ion binding"/>
    <property type="evidence" value="ECO:0007669"/>
    <property type="project" value="UniProtKB-UniRule"/>
</dbReference>
<dbReference type="GO" id="GO:0003964">
    <property type="term" value="F:RNA-directed DNA polymerase activity"/>
    <property type="evidence" value="ECO:0007669"/>
    <property type="project" value="UniProtKB-UniRule"/>
</dbReference>
<dbReference type="GO" id="GO:0004523">
    <property type="term" value="F:RNA-DNA hybrid ribonuclease activity"/>
    <property type="evidence" value="ECO:0007669"/>
    <property type="project" value="UniProtKB-UniRule"/>
</dbReference>
<dbReference type="GO" id="GO:0006260">
    <property type="term" value="P:DNA replication"/>
    <property type="evidence" value="ECO:0007669"/>
    <property type="project" value="UniProtKB-UniRule"/>
</dbReference>
<dbReference type="GO" id="GO:0052170">
    <property type="term" value="P:symbiont-mediated suppression of host innate immune response"/>
    <property type="evidence" value="ECO:0007669"/>
    <property type="project" value="UniProtKB-UniRule"/>
</dbReference>
<dbReference type="FunFam" id="3.30.70.270:FF:000009">
    <property type="entry name" value="Protein P"/>
    <property type="match status" value="1"/>
</dbReference>
<dbReference type="Gene3D" id="3.30.70.270">
    <property type="match status" value="1"/>
</dbReference>
<dbReference type="HAMAP" id="MF_04073">
    <property type="entry name" value="HBV_DPOL"/>
    <property type="match status" value="1"/>
</dbReference>
<dbReference type="InterPro" id="IPR043502">
    <property type="entry name" value="DNA/RNA_pol_sf"/>
</dbReference>
<dbReference type="InterPro" id="IPR001462">
    <property type="entry name" value="DNApol_viral_C"/>
</dbReference>
<dbReference type="InterPro" id="IPR000201">
    <property type="entry name" value="DNApol_viral_N"/>
</dbReference>
<dbReference type="InterPro" id="IPR037531">
    <property type="entry name" value="HBV_DPOL"/>
</dbReference>
<dbReference type="InterPro" id="IPR043128">
    <property type="entry name" value="Rev_trsase/Diguanyl_cyclase"/>
</dbReference>
<dbReference type="InterPro" id="IPR000477">
    <property type="entry name" value="RT_dom"/>
</dbReference>
<dbReference type="InterPro" id="IPR051320">
    <property type="entry name" value="Viral_Replic_Matur_Polypro"/>
</dbReference>
<dbReference type="PANTHER" id="PTHR33064:SF29">
    <property type="entry name" value="PEPTIDASE A2 DOMAIN-CONTAINING PROTEIN-RELATED"/>
    <property type="match status" value="1"/>
</dbReference>
<dbReference type="PANTHER" id="PTHR33064">
    <property type="entry name" value="POL PROTEIN"/>
    <property type="match status" value="1"/>
</dbReference>
<dbReference type="Pfam" id="PF00336">
    <property type="entry name" value="DNA_pol_viral_C"/>
    <property type="match status" value="1"/>
</dbReference>
<dbReference type="Pfam" id="PF00242">
    <property type="entry name" value="DNA_pol_viral_N"/>
    <property type="match status" value="1"/>
</dbReference>
<dbReference type="Pfam" id="PF00078">
    <property type="entry name" value="RVT_1"/>
    <property type="match status" value="1"/>
</dbReference>
<dbReference type="SUPFAM" id="SSF56672">
    <property type="entry name" value="DNA/RNA polymerases"/>
    <property type="match status" value="1"/>
</dbReference>
<dbReference type="PROSITE" id="PS50878">
    <property type="entry name" value="RT_POL"/>
    <property type="match status" value="1"/>
</dbReference>
<name>DPOL_HBVA3</name>
<protein>
    <recommendedName>
        <fullName evidence="1">Protein P</fullName>
    </recommendedName>
    <domain>
        <recommendedName>
            <fullName evidence="1">DNA-directed DNA polymerase</fullName>
            <ecNumber evidence="1">2.7.7.7</ecNumber>
        </recommendedName>
    </domain>
    <domain>
        <recommendedName>
            <fullName evidence="1">RNA-directed DNA polymerase</fullName>
            <ecNumber evidence="1">2.7.7.49</ecNumber>
        </recommendedName>
    </domain>
    <domain>
        <recommendedName>
            <fullName evidence="1">Ribonuclease H</fullName>
            <ecNumber evidence="1">3.1.26.4</ecNumber>
        </recommendedName>
    </domain>
</protein>
<organismHost>
    <name type="scientific">Homo sapiens</name>
    <name type="common">Human</name>
    <dbReference type="NCBI Taxonomy" id="9606"/>
</organismHost>
<organismHost>
    <name type="scientific">Pan troglodytes</name>
    <name type="common">Chimpanzee</name>
    <dbReference type="NCBI Taxonomy" id="9598"/>
</organismHost>
<evidence type="ECO:0000255" key="1">
    <source>
        <dbReference type="HAMAP-Rule" id="MF_04073"/>
    </source>
</evidence>
<evidence type="ECO:0000256" key="2">
    <source>
        <dbReference type="SAM" id="MobiDB-lite"/>
    </source>
</evidence>
<reference key="1">
    <citation type="book" date="1980" name="Animal virus genetics">
        <title>The nucleotide sequence of the hepatitis B viral genome and the identification of the major viral genes.</title>
        <editorList>
            <person name="Field B.N."/>
            <person name="Jaenisch R."/>
            <person name="Fox C.F."/>
        </editorList>
        <authorList>
            <person name="Valenzuela P."/>
            <person name="Quiroga M."/>
            <person name="Zaldivar J."/>
            <person name="Gray P."/>
            <person name="Rutter W.J."/>
        </authorList>
    </citation>
    <scope>NUCLEOTIDE SEQUENCE [GENOMIC DNA]</scope>
</reference>
<reference key="2">
    <citation type="journal article" date="1979" name="Nature">
        <title>Nucleotide sequence of the gene coding for the major protein of hepatitis B virus surface antigen.</title>
        <authorList>
            <person name="Valenzuela P."/>
            <person name="Gray P."/>
            <person name="Quiroga M."/>
            <person name="Zaldivar J."/>
            <person name="Goodman H.M."/>
            <person name="Rutter W.J."/>
        </authorList>
    </citation>
    <scope>NUCLEOTIDE SEQUENCE [GENOMIC DNA] OF 315-611</scope>
</reference>
<reference key="3">
    <citation type="journal article" date="2000" name="J. Med. Virol.">
        <title>Profound suppression of hepatitis B virus replication with lamivudine.</title>
        <authorList>
            <person name="Lai C.L."/>
            <person name="Yuen M.F."/>
        </authorList>
    </citation>
    <scope>INHIBITION BY LAMIVUDINE</scope>
</reference>
<reference key="4">
    <citation type="journal article" date="2004" name="Expert Rev. Anti Infect. Ther.">
        <title>Adefovir dipivoxil in the treatment of chronic hepatitis B virus infection.</title>
        <authorList>
            <person name="Hadziyannis S.J."/>
            <person name="Papatheodoridis G.V."/>
        </authorList>
    </citation>
    <scope>INHIBITION BY ADEFOVIR</scope>
</reference>
<reference key="5">
    <citation type="journal article" date="2007" name="J. Virol.">
        <title>Inhibition of hepatitis B virus polymerase by entecavir.</title>
        <authorList>
            <person name="Langley D.R."/>
            <person name="Walsh A.W."/>
            <person name="Baldick C.J."/>
            <person name="Eggers B.J."/>
            <person name="Rose R.E."/>
            <person name="Levine S.M."/>
            <person name="Kapur A.J."/>
            <person name="Colonno R.J."/>
            <person name="Tenney D.J."/>
        </authorList>
    </citation>
    <scope>INHIBITION BY ENTECAVIR</scope>
</reference>
<reference key="6">
    <citation type="journal article" date="2007" name="World J. Gastroenterol.">
        <title>Hepatitis B virus replication.</title>
        <authorList>
            <person name="Beck J."/>
            <person name="Nassal M."/>
        </authorList>
    </citation>
    <scope>REVIEW</scope>
</reference>
<comment type="function">
    <text evidence="1">Multifunctional enzyme that converts the viral RNA genome into dsDNA in viral cytoplasmic capsids. This enzyme displays a DNA polymerase activity that can copy either DNA or RNA templates, and a ribonuclease H (RNase H) activity that cleaves the RNA strand of RNA-DNA heteroduplexes in a partially processive 3'- to 5'-endonucleasic mode. Neo-synthesized pregenomic RNA (pgRNA) are encapsidated together with the P protein, and reverse-transcribed inside the nucleocapsid. Initiation of reverse-transcription occurs first by binding the epsilon loop on the pgRNA genome, and is initiated by protein priming, thereby the 5'-end of (-)DNA is covalently linked to P protein. Partial (+)DNA is synthesized from the (-)DNA template and generates the relaxed circular DNA (RC-DNA) genome. After budding and infection, the RC-DNA migrates in the nucleus, and is converted into a plasmid-like covalently closed circular DNA (cccDNA). The activity of P protein does not seem to be necessary for cccDNA generation, and is presumably released from (+)DNA by host nuclear DNA repair machinery.</text>
</comment>
<comment type="catalytic activity">
    <reaction evidence="1">
        <text>DNA(n) + a 2'-deoxyribonucleoside 5'-triphosphate = DNA(n+1) + diphosphate</text>
        <dbReference type="Rhea" id="RHEA:22508"/>
        <dbReference type="Rhea" id="RHEA-COMP:17339"/>
        <dbReference type="Rhea" id="RHEA-COMP:17340"/>
        <dbReference type="ChEBI" id="CHEBI:33019"/>
        <dbReference type="ChEBI" id="CHEBI:61560"/>
        <dbReference type="ChEBI" id="CHEBI:173112"/>
        <dbReference type="EC" id="2.7.7.7"/>
    </reaction>
</comment>
<comment type="catalytic activity">
    <reaction evidence="1">
        <text>DNA(n) + a 2'-deoxyribonucleoside 5'-triphosphate = DNA(n+1) + diphosphate</text>
        <dbReference type="Rhea" id="RHEA:22508"/>
        <dbReference type="Rhea" id="RHEA-COMP:17339"/>
        <dbReference type="Rhea" id="RHEA-COMP:17340"/>
        <dbReference type="ChEBI" id="CHEBI:33019"/>
        <dbReference type="ChEBI" id="CHEBI:61560"/>
        <dbReference type="ChEBI" id="CHEBI:173112"/>
        <dbReference type="EC" id="2.7.7.49"/>
    </reaction>
</comment>
<comment type="catalytic activity">
    <reaction evidence="1">
        <text>Endonucleolytic cleavage to 5'-phosphomonoester.</text>
        <dbReference type="EC" id="3.1.26.4"/>
    </reaction>
</comment>
<comment type="activity regulation">
    <text evidence="1">Activated by host HSP70 and HSP40 in vitro to be able to bind the epsilon loop of the pgRNA. Because deletion of the RNase H region renders the protein partly chaperone-independent, the chaperones may be needed indirectly to relieve occlusion of the RNA-binding site by this domain. Inhibited by several reverse-transcriptase inhibitors: Lamivudine, Adefovir and Entecavir.</text>
</comment>
<comment type="domain">
    <text evidence="1">Terminal protein domain (TP) is hepadnavirus-specific. Spacer domain is highly variable and separates the TP and RT domains. Polymerase/reverse-transcriptase domain (RT) and ribonuclease H domain (RH) are similar to retrovirus reverse transcriptase/RNase H.</text>
</comment>
<comment type="domain">
    <text evidence="1">The polymerase/reverse transcriptase (RT) and ribonuclease H (RH) domains are structured in five subdomains: finger, palm, thumb, connection and RNase H. Within the palm subdomain, the 'primer grip' region is thought to be involved in the positioning of the primer terminus for accommodating the incoming nucleotide. The RH domain stabilizes the association of RT with primer-template.</text>
</comment>
<comment type="miscellaneous">
    <text evidence="1">Hepadnaviral virions contain probably just one P protein molecule per particle.</text>
</comment>
<comment type="similarity">
    <text evidence="1">Belongs to the hepadnaviridae P protein family.</text>
</comment>
<sequence length="845" mass="94800">MPLSYQHFRKLLLLDDGTEAGPLEEELPRLADADLHRRVAEDLNLGNLNVSIPWTHKVGNFTGLYSSTVPIFNPEWQTPSFPKIHLQEDIINRCQQFVGPLTVNEKRRLKLIMPARFYPTHTKYLPLDKGIKPYYPDQVVNHYFQTRHYLHTLWKAGILYKRETTRSASFCGSPYSWEQELQHGRLVIKTSQRHGDESFCSQSSGILSRSSVGPCIRSQLKQSRLGLQPRQGRLASSQPSRSGSIRAKAHPSTRRYFGVEPSGSGHIDHSVNNSSSCLHQSAVRKAAYSHLSTSKRQSSSGHAVEFHCLPPNSAGSQSQGSVSSCWWLQFRNSKPCSEYCLSHLVNLREDWGPCDEHGEHHIRIPRTPARVTGGVFLVDKNPHNTAESRLVVDFSQFSRGISRVSWPKFAVPNLQSLTNLLSSNLSWLSLDVSAAFYHIPLHPAAMPHLLIGSSGLSRYVARLSSNSRINNNQYGTMQNLHDSCSRQLYVSLMLLYKTYGWKLHLYSHPIVLGFRKIPMGVGLSPFLLAQFTSAICSVVRRAFPHCLAFSYMDDVVLGAKSVQHRESLYTAVTNFLLSLGIHLNPNKTKRWGYSLNFMGYIIGSWGTLPQDHIVQKIKHCFRKLPVNRPIDWKVCQRIVGLLGFAAPFTQCGYPALMPLYACIQAKQAFTFSPTYKAFLSKQYMNLYPVARQRPGLCQVFADATPTGWGLAIGHQRMRGTFVAPLPIHTAELLAACFARSRSGAKLIGTDNSVVLSRKYTSFPWLLGCTANWILRGTSFVYVPSALNPADDPSRGRLGLSRPLLRLPFQPTTGRTSLYAVSPSVPSHLPVRVHFASPLHVAWRPP</sequence>
<gene>
    <name evidence="1" type="primary">P</name>
</gene>
<feature type="chain" id="PRO_0000222333" description="Protein P">
    <location>
        <begin position="1"/>
        <end position="845"/>
    </location>
</feature>
<feature type="domain" description="Reverse transcriptase" evidence="1">
    <location>
        <begin position="359"/>
        <end position="602"/>
    </location>
</feature>
<feature type="region of interest" description="Terminal protein domain (TP)" evidence="1">
    <location>
        <begin position="1"/>
        <end position="179"/>
    </location>
</feature>
<feature type="region of interest" description="Spacer" evidence="1">
    <location>
        <begin position="180"/>
        <end position="348"/>
    </location>
</feature>
<feature type="region of interest" description="Disordered" evidence="2">
    <location>
        <begin position="226"/>
        <end position="252"/>
    </location>
</feature>
<feature type="region of interest" description="Polymerase/reverse transcriptase domain (RT)" evidence="1">
    <location>
        <begin position="349"/>
        <end position="692"/>
    </location>
</feature>
<feature type="region of interest" description="RnaseH domain (RH)">
    <location>
        <begin position="693"/>
        <end position="845"/>
    </location>
</feature>
<feature type="compositionally biased region" description="Polar residues" evidence="2">
    <location>
        <begin position="234"/>
        <end position="243"/>
    </location>
</feature>
<feature type="binding site" evidence="1">
    <location>
        <position position="431"/>
    </location>
    <ligand>
        <name>Mg(2+)</name>
        <dbReference type="ChEBI" id="CHEBI:18420"/>
        <note>catalytic</note>
    </ligand>
</feature>
<feature type="binding site" evidence="1">
    <location>
        <position position="553"/>
    </location>
    <ligand>
        <name>Mg(2+)</name>
        <dbReference type="ChEBI" id="CHEBI:18420"/>
        <note>catalytic</note>
    </ligand>
</feature>
<feature type="binding site" evidence="1">
    <location>
        <position position="554"/>
    </location>
    <ligand>
        <name>Mg(2+)</name>
        <dbReference type="ChEBI" id="CHEBI:18420"/>
        <note>catalytic</note>
    </ligand>
</feature>
<feature type="site" description="Priming of reverse-transcription by covalently linking the first nucleotide of the (-)DNA" evidence="1">
    <location>
        <position position="65"/>
    </location>
</feature>
<organism>
    <name type="scientific">Hepatitis B virus genotype A2 subtype adw2 (strain Rutter 1979)</name>
    <name type="common">HBV-A</name>
    <dbReference type="NCBI Taxonomy" id="480116"/>
    <lineage>
        <taxon>Viruses</taxon>
        <taxon>Riboviria</taxon>
        <taxon>Pararnavirae</taxon>
        <taxon>Artverviricota</taxon>
        <taxon>Revtraviricetes</taxon>
        <taxon>Blubervirales</taxon>
        <taxon>Hepadnaviridae</taxon>
        <taxon>Orthohepadnavirus</taxon>
        <taxon>Hepatitis B virus</taxon>
    </lineage>
</organism>
<keyword id="KW-0235">DNA replication</keyword>
<keyword id="KW-0238">DNA-binding</keyword>
<keyword id="KW-0239">DNA-directed DNA polymerase</keyword>
<keyword id="KW-0255">Endonuclease</keyword>
<keyword id="KW-0945">Host-virus interaction</keyword>
<keyword id="KW-0378">Hydrolase</keyword>
<keyword id="KW-1090">Inhibition of host innate immune response by virus</keyword>
<keyword id="KW-1113">Inhibition of host RLR pathway by virus</keyword>
<keyword id="KW-0460">Magnesium</keyword>
<keyword id="KW-0479">Metal-binding</keyword>
<keyword id="KW-0511">Multifunctional enzyme</keyword>
<keyword id="KW-0540">Nuclease</keyword>
<keyword id="KW-0548">Nucleotidyltransferase</keyword>
<keyword id="KW-0695">RNA-directed DNA polymerase</keyword>
<keyword id="KW-0808">Transferase</keyword>
<keyword id="KW-0899">Viral immunoevasion</keyword>
<proteinExistence type="inferred from homology"/>